<sequence>MFKFVFKRILMVIPTFIAITLITFALVHFIPGDPVEIMMGERGLTAEVHQQMMHQLGLDLPLYQQYFHYIGNVIQGDFGASFRTQQPVLTEFFTLFPATAELAFFALFWSLLGGIILGTIAAVKKDSWISHTVTAASLTGYSMPIFWWGLILILYVSPQLGLPQGGRLDNEFWIDTPTGFMLIDSWLSGVSGAFENAVKSLILPAIVLGTVPLAIITRMTRSAMLEVLGEDYIRTAKAKGLSYTRIVIVHALRNALIPVVTVVGLIVAQLLSGAVLTETIFSWPGIGKWIIDAIQARDYPVLQGSVLIIATIIIVVNLTVDLLYGVVNPRIRH</sequence>
<proteinExistence type="inferred from homology"/>
<comment type="function">
    <text evidence="1">Part of the ABC transporter DppBCDF involved in dipeptide transport. Responsible for the translocation of the substrate across the membrane.</text>
</comment>
<comment type="subcellular location">
    <subcellularLocation>
        <location evidence="3">Cell inner membrane</location>
        <topology evidence="2">Multi-pass membrane protein</topology>
    </subcellularLocation>
</comment>
<comment type="similarity">
    <text evidence="3">Belongs to the binding-protein-dependent transport system permease family. OppBC subfamily.</text>
</comment>
<name>DPPB_HAEIN</name>
<dbReference type="EMBL" id="L42023">
    <property type="protein sequence ID" value="AAC22840.1"/>
    <property type="molecule type" value="Genomic_DNA"/>
</dbReference>
<dbReference type="EMBL" id="U17295">
    <property type="protein sequence ID" value="AAA95972.1"/>
    <property type="molecule type" value="Genomic_DNA"/>
</dbReference>
<dbReference type="PIR" id="G64188">
    <property type="entry name" value="G64188"/>
</dbReference>
<dbReference type="RefSeq" id="NP_439343.2">
    <property type="nucleotide sequence ID" value="NC_000907.1"/>
</dbReference>
<dbReference type="SMR" id="P45096"/>
<dbReference type="STRING" id="71421.HI_1187"/>
<dbReference type="TCDB" id="3.A.1.5.27">
    <property type="family name" value="the atp-binding cassette (abc) superfamily"/>
</dbReference>
<dbReference type="EnsemblBacteria" id="AAC22840">
    <property type="protein sequence ID" value="AAC22840"/>
    <property type="gene ID" value="HI_1187"/>
</dbReference>
<dbReference type="KEGG" id="hin:HI_1187"/>
<dbReference type="PATRIC" id="fig|71421.8.peg.1238"/>
<dbReference type="eggNOG" id="COG0601">
    <property type="taxonomic scope" value="Bacteria"/>
</dbReference>
<dbReference type="HOGENOM" id="CLU_036879_0_0_6"/>
<dbReference type="OrthoDB" id="9805855at2"/>
<dbReference type="PhylomeDB" id="P45096"/>
<dbReference type="Proteomes" id="UP000000579">
    <property type="component" value="Chromosome"/>
</dbReference>
<dbReference type="GO" id="GO:0005886">
    <property type="term" value="C:plasma membrane"/>
    <property type="evidence" value="ECO:0007669"/>
    <property type="project" value="UniProtKB-SubCell"/>
</dbReference>
<dbReference type="GO" id="GO:0071916">
    <property type="term" value="F:dipeptide transmembrane transporter activity"/>
    <property type="evidence" value="ECO:0000318"/>
    <property type="project" value="GO_Central"/>
</dbReference>
<dbReference type="GO" id="GO:0015031">
    <property type="term" value="P:protein transport"/>
    <property type="evidence" value="ECO:0007669"/>
    <property type="project" value="UniProtKB-KW"/>
</dbReference>
<dbReference type="CDD" id="cd06261">
    <property type="entry name" value="TM_PBP2"/>
    <property type="match status" value="1"/>
</dbReference>
<dbReference type="FunFam" id="1.10.3720.10:FF:000025">
    <property type="entry name" value="Dipeptide ABC transporter permease DppB"/>
    <property type="match status" value="1"/>
</dbReference>
<dbReference type="Gene3D" id="1.10.3720.10">
    <property type="entry name" value="MetI-like"/>
    <property type="match status" value="1"/>
</dbReference>
<dbReference type="InterPro" id="IPR045621">
    <property type="entry name" value="BPD_transp_1_N"/>
</dbReference>
<dbReference type="InterPro" id="IPR000515">
    <property type="entry name" value="MetI-like"/>
</dbReference>
<dbReference type="InterPro" id="IPR035906">
    <property type="entry name" value="MetI-like_sf"/>
</dbReference>
<dbReference type="PANTHER" id="PTHR43163">
    <property type="entry name" value="DIPEPTIDE TRANSPORT SYSTEM PERMEASE PROTEIN DPPB-RELATED"/>
    <property type="match status" value="1"/>
</dbReference>
<dbReference type="PANTHER" id="PTHR43163:SF6">
    <property type="entry name" value="DIPEPTIDE TRANSPORT SYSTEM PERMEASE PROTEIN DPPB-RELATED"/>
    <property type="match status" value="1"/>
</dbReference>
<dbReference type="Pfam" id="PF00528">
    <property type="entry name" value="BPD_transp_1"/>
    <property type="match status" value="1"/>
</dbReference>
<dbReference type="Pfam" id="PF19300">
    <property type="entry name" value="BPD_transp_1_N"/>
    <property type="match status" value="1"/>
</dbReference>
<dbReference type="SUPFAM" id="SSF161098">
    <property type="entry name" value="MetI-like"/>
    <property type="match status" value="1"/>
</dbReference>
<dbReference type="PROSITE" id="PS50928">
    <property type="entry name" value="ABC_TM1"/>
    <property type="match status" value="1"/>
</dbReference>
<organism>
    <name type="scientific">Haemophilus influenzae (strain ATCC 51907 / DSM 11121 / KW20 / Rd)</name>
    <dbReference type="NCBI Taxonomy" id="71421"/>
    <lineage>
        <taxon>Bacteria</taxon>
        <taxon>Pseudomonadati</taxon>
        <taxon>Pseudomonadota</taxon>
        <taxon>Gammaproteobacteria</taxon>
        <taxon>Pasteurellales</taxon>
        <taxon>Pasteurellaceae</taxon>
        <taxon>Haemophilus</taxon>
    </lineage>
</organism>
<gene>
    <name type="primary">dppB</name>
    <name type="ordered locus">HI_1187</name>
</gene>
<evidence type="ECO:0000250" key="1">
    <source>
        <dbReference type="UniProtKB" id="P0AEF8"/>
    </source>
</evidence>
<evidence type="ECO:0000255" key="2">
    <source>
        <dbReference type="PROSITE-ProRule" id="PRU00441"/>
    </source>
</evidence>
<evidence type="ECO:0000305" key="3"/>
<protein>
    <recommendedName>
        <fullName evidence="1">Dipeptide transport system permease protein DppB</fullName>
    </recommendedName>
</protein>
<accession>P45096</accession>
<keyword id="KW-0997">Cell inner membrane</keyword>
<keyword id="KW-1003">Cell membrane</keyword>
<keyword id="KW-0472">Membrane</keyword>
<keyword id="KW-0571">Peptide transport</keyword>
<keyword id="KW-0653">Protein transport</keyword>
<keyword id="KW-1185">Reference proteome</keyword>
<keyword id="KW-0812">Transmembrane</keyword>
<keyword id="KW-1133">Transmembrane helix</keyword>
<keyword id="KW-0813">Transport</keyword>
<reference key="1">
    <citation type="journal article" date="1995" name="Science">
        <title>Whole-genome random sequencing and assembly of Haemophilus influenzae Rd.</title>
        <authorList>
            <person name="Fleischmann R.D."/>
            <person name="Adams M.D."/>
            <person name="White O."/>
            <person name="Clayton R.A."/>
            <person name="Kirkness E.F."/>
            <person name="Kerlavage A.R."/>
            <person name="Bult C.J."/>
            <person name="Tomb J.-F."/>
            <person name="Dougherty B.A."/>
            <person name="Merrick J.M."/>
            <person name="McKenney K."/>
            <person name="Sutton G.G."/>
            <person name="FitzHugh W."/>
            <person name="Fields C.A."/>
            <person name="Gocayne J.D."/>
            <person name="Scott J.D."/>
            <person name="Shirley R."/>
            <person name="Liu L.-I."/>
            <person name="Glodek A."/>
            <person name="Kelley J.M."/>
            <person name="Weidman J.F."/>
            <person name="Phillips C.A."/>
            <person name="Spriggs T."/>
            <person name="Hedblom E."/>
            <person name="Cotton M.D."/>
            <person name="Utterback T.R."/>
            <person name="Hanna M.C."/>
            <person name="Nguyen D.T."/>
            <person name="Saudek D.M."/>
            <person name="Brandon R.C."/>
            <person name="Fine L.D."/>
            <person name="Fritchman J.L."/>
            <person name="Fuhrmann J.L."/>
            <person name="Geoghagen N.S.M."/>
            <person name="Gnehm C.L."/>
            <person name="McDonald L.A."/>
            <person name="Small K.V."/>
            <person name="Fraser C.M."/>
            <person name="Smith H.O."/>
            <person name="Venter J.C."/>
        </authorList>
    </citation>
    <scope>NUCLEOTIDE SEQUENCE [LARGE SCALE GENOMIC DNA]</scope>
    <source>
        <strain>ATCC 51907 / DSM 11121 / KW20 / Rd</strain>
    </source>
</reference>
<reference key="2">
    <citation type="journal article" date="1996" name="J. Bacteriol.">
        <title>Altered lipopolysaccharide characteristic of the I69 phenotype in Haemophilus influenzae results from mutations in a novel gene, isn.</title>
        <authorList>
            <person name="Preston A."/>
            <person name="Maskell D."/>
            <person name="Johnson A."/>
            <person name="Moxon E.R."/>
        </authorList>
    </citation>
    <scope>NUCLEOTIDE SEQUENCE [GENOMIC DNA]</scope>
    <source>
        <strain>ATCC 51907 / DSM 11121 / KW20 / Rd</strain>
    </source>
</reference>
<feature type="chain" id="PRO_0000060008" description="Dipeptide transport system permease protein DppB">
    <location>
        <begin position="1"/>
        <end position="333"/>
    </location>
</feature>
<feature type="transmembrane region" description="Helical" evidence="2">
    <location>
        <begin position="9"/>
        <end position="29"/>
    </location>
</feature>
<feature type="transmembrane region" description="Helical" evidence="2">
    <location>
        <begin position="103"/>
        <end position="123"/>
    </location>
</feature>
<feature type="transmembrane region" description="Helical" evidence="2">
    <location>
        <begin position="136"/>
        <end position="156"/>
    </location>
</feature>
<feature type="transmembrane region" description="Helical" evidence="2">
    <location>
        <begin position="197"/>
        <end position="217"/>
    </location>
</feature>
<feature type="transmembrane region" description="Helical" evidence="2">
    <location>
        <begin position="256"/>
        <end position="276"/>
    </location>
</feature>
<feature type="transmembrane region" description="Helical" evidence="2">
    <location>
        <begin position="306"/>
        <end position="326"/>
    </location>
</feature>
<feature type="domain" description="ABC transmembrane type-1" evidence="2">
    <location>
        <begin position="96"/>
        <end position="328"/>
    </location>
</feature>